<organism>
    <name type="scientific">Homo sapiens</name>
    <name type="common">Human</name>
    <dbReference type="NCBI Taxonomy" id="9606"/>
    <lineage>
        <taxon>Eukaryota</taxon>
        <taxon>Metazoa</taxon>
        <taxon>Chordata</taxon>
        <taxon>Craniata</taxon>
        <taxon>Vertebrata</taxon>
        <taxon>Euteleostomi</taxon>
        <taxon>Mammalia</taxon>
        <taxon>Eutheria</taxon>
        <taxon>Euarchontoglires</taxon>
        <taxon>Primates</taxon>
        <taxon>Haplorrhini</taxon>
        <taxon>Catarrhini</taxon>
        <taxon>Hominidae</taxon>
        <taxon>Homo</taxon>
    </lineage>
</organism>
<dbReference type="EMBL" id="AF136380">
    <property type="protein sequence ID" value="AAD27647.1"/>
    <property type="molecule type" value="mRNA"/>
</dbReference>
<dbReference type="EMBL" id="AF356525">
    <property type="protein sequence ID" value="AAK37563.1"/>
    <property type="molecule type" value="mRNA"/>
</dbReference>
<dbReference type="EMBL" id="AF356526">
    <property type="protein sequence ID" value="AAK37564.1"/>
    <property type="molecule type" value="mRNA"/>
</dbReference>
<dbReference type="EMBL" id="AF356527">
    <property type="protein sequence ID" value="AAK37565.1"/>
    <property type="molecule type" value="mRNA"/>
</dbReference>
<dbReference type="EMBL" id="AF330623">
    <property type="protein sequence ID" value="AAK57479.1"/>
    <property type="molecule type" value="mRNA"/>
</dbReference>
<dbReference type="EMBL" id="AF330624">
    <property type="protein sequence ID" value="AAK57480.1"/>
    <property type="molecule type" value="mRNA"/>
</dbReference>
<dbReference type="EMBL" id="AF136381">
    <property type="protein sequence ID" value="AAF22175.1"/>
    <property type="molecule type" value="mRNA"/>
</dbReference>
<dbReference type="EMBL" id="AJ489942">
    <property type="protein sequence ID" value="CAD34588.1"/>
    <property type="molecule type" value="mRNA"/>
</dbReference>
<dbReference type="EMBL" id="AM260536">
    <property type="protein sequence ID" value="CAJ97431.1"/>
    <property type="molecule type" value="mRNA"/>
</dbReference>
<dbReference type="EMBL" id="AB037717">
    <property type="protein sequence ID" value="BAA92534.1"/>
    <property type="status" value="ALT_INIT"/>
    <property type="molecule type" value="mRNA"/>
</dbReference>
<dbReference type="EMBL" id="AL117472">
    <property type="protein sequence ID" value="CAB55947.1"/>
    <property type="molecule type" value="mRNA"/>
</dbReference>
<dbReference type="EMBL" id="AL158165">
    <property type="status" value="NOT_ANNOTATED_CDS"/>
    <property type="molecule type" value="Genomic_DNA"/>
</dbReference>
<dbReference type="EMBL" id="CH471066">
    <property type="protein sequence ID" value="EAW49999.1"/>
    <property type="molecule type" value="Genomic_DNA"/>
</dbReference>
<dbReference type="EMBL" id="CH471066">
    <property type="protein sequence ID" value="EAW50007.1"/>
    <property type="molecule type" value="Genomic_DNA"/>
</dbReference>
<dbReference type="EMBL" id="BC042612">
    <property type="protein sequence ID" value="AAH42612.1"/>
    <property type="molecule type" value="mRNA"/>
</dbReference>
<dbReference type="EMBL" id="BC152463">
    <property type="protein sequence ID" value="AAI52464.1"/>
    <property type="molecule type" value="mRNA"/>
</dbReference>
<dbReference type="EMBL" id="U70668">
    <property type="protein sequence ID" value="AAB93496.1"/>
    <property type="status" value="ALT_FRAME"/>
    <property type="molecule type" value="mRNA"/>
</dbReference>
<dbReference type="CCDS" id="CCDS31252.1">
    <molecule id="Q9BX66-4"/>
</dbReference>
<dbReference type="CCDS" id="CCDS31253.1">
    <molecule id="Q9BX66-9"/>
</dbReference>
<dbReference type="CCDS" id="CCDS31254.1">
    <molecule id="Q9BX66-2"/>
</dbReference>
<dbReference type="CCDS" id="CCDS31255.1">
    <molecule id="Q9BX66-1"/>
</dbReference>
<dbReference type="CCDS" id="CCDS31256.1">
    <molecule id="Q9BX66-3"/>
</dbReference>
<dbReference type="CCDS" id="CCDS73169.1">
    <molecule id="Q9BX66-11"/>
</dbReference>
<dbReference type="CCDS" id="CCDS7442.1">
    <molecule id="Q9BX66-10"/>
</dbReference>
<dbReference type="CCDS" id="CCDS76326.1">
    <molecule id="Q9BX66-8"/>
</dbReference>
<dbReference type="CCDS" id="CCDS76327.1">
    <molecule id="Q9BX66-5"/>
</dbReference>
<dbReference type="PIR" id="T17257">
    <property type="entry name" value="T17257"/>
</dbReference>
<dbReference type="RefSeq" id="NP_001030126.2">
    <molecule id="Q9BX66-1"/>
    <property type="nucleotide sequence ID" value="NM_001034954.3"/>
</dbReference>
<dbReference type="RefSeq" id="NP_001030127.2">
    <molecule id="Q9BX66-2"/>
    <property type="nucleotide sequence ID" value="NM_001034955.2"/>
</dbReference>
<dbReference type="RefSeq" id="NP_001030128.2">
    <molecule id="Q9BX66-3"/>
    <property type="nucleotide sequence ID" value="NM_001034956.2"/>
</dbReference>
<dbReference type="RefSeq" id="NP_001030129.1">
    <property type="nucleotide sequence ID" value="NM_001034957.1"/>
</dbReference>
<dbReference type="RefSeq" id="NP_001277223.2">
    <molecule id="Q9BX66-11"/>
    <property type="nucleotide sequence ID" value="NM_001290294.2"/>
</dbReference>
<dbReference type="RefSeq" id="NP_001277224.1">
    <property type="nucleotide sequence ID" value="NM_001290295.1"/>
</dbReference>
<dbReference type="RefSeq" id="NP_001277225.2">
    <molecule id="Q9BX66-5"/>
    <property type="nucleotide sequence ID" value="NM_001290296.2"/>
</dbReference>
<dbReference type="RefSeq" id="NP_001277226.2">
    <molecule id="Q9BX66-8"/>
    <property type="nucleotide sequence ID" value="NM_001290297.3"/>
</dbReference>
<dbReference type="RefSeq" id="NP_001277227.2">
    <molecule id="Q9BX66-6"/>
    <property type="nucleotide sequence ID" value="NM_001290298.3"/>
</dbReference>
<dbReference type="RefSeq" id="NP_001371384.1">
    <molecule id="Q9BX66-8"/>
    <property type="nucleotide sequence ID" value="NM_001384455.1"/>
</dbReference>
<dbReference type="RefSeq" id="NP_001371385.1">
    <molecule id="Q9BX66-8"/>
    <property type="nucleotide sequence ID" value="NM_001384456.1"/>
</dbReference>
<dbReference type="RefSeq" id="NP_001371386.1">
    <molecule id="Q9BX66-8"/>
    <property type="nucleotide sequence ID" value="NM_001384457.1"/>
</dbReference>
<dbReference type="RefSeq" id="NP_006425.3">
    <molecule id="Q9BX66-4"/>
    <property type="nucleotide sequence ID" value="NM_006434.4"/>
</dbReference>
<dbReference type="RefSeq" id="NP_056200.2">
    <molecule id="Q9BX66-10"/>
    <property type="nucleotide sequence ID" value="NM_015385.4"/>
</dbReference>
<dbReference type="RefSeq" id="NP_079267.2">
    <molecule id="Q9BX66-9"/>
    <property type="nucleotide sequence ID" value="NM_024991.3"/>
</dbReference>
<dbReference type="RefSeq" id="XP_006717652.1">
    <molecule id="Q9BX66-5"/>
    <property type="nucleotide sequence ID" value="XM_006717589.3"/>
</dbReference>
<dbReference type="PDB" id="2DL3">
    <property type="method" value="NMR"/>
    <property type="chains" value="A=796-850"/>
</dbReference>
<dbReference type="PDB" id="2ECZ">
    <property type="method" value="NMR"/>
    <property type="chains" value="A=870-926"/>
</dbReference>
<dbReference type="PDB" id="2LJ0">
    <property type="method" value="NMR"/>
    <property type="chains" value="A=1228-1292"/>
</dbReference>
<dbReference type="PDB" id="2LJ1">
    <property type="method" value="NMR"/>
    <property type="chains" value="A=1228-1291"/>
</dbReference>
<dbReference type="PDB" id="2MOX">
    <property type="method" value="NMR"/>
    <property type="chains" value="A=791-930"/>
</dbReference>
<dbReference type="PDB" id="2O2W">
    <property type="method" value="X-ray"/>
    <property type="resolution" value="2.27 A"/>
    <property type="chains" value="A=870-930"/>
</dbReference>
<dbReference type="PDB" id="2O31">
    <property type="method" value="X-ray"/>
    <property type="resolution" value="1.50 A"/>
    <property type="chains" value="A=870-930"/>
</dbReference>
<dbReference type="PDB" id="2O9S">
    <property type="method" value="X-ray"/>
    <property type="resolution" value="0.83 A"/>
    <property type="chains" value="A=870-930"/>
</dbReference>
<dbReference type="PDB" id="2O9V">
    <property type="method" value="X-ray"/>
    <property type="resolution" value="1.63 A"/>
    <property type="chains" value="A=870-930"/>
</dbReference>
<dbReference type="PDB" id="4LN2">
    <property type="method" value="X-ray"/>
    <property type="resolution" value="1.00 A"/>
    <property type="chains" value="A=866-930"/>
</dbReference>
<dbReference type="PDB" id="4LNP">
    <property type="method" value="X-ray"/>
    <property type="resolution" value="1.41 A"/>
    <property type="chains" value="A=794-854"/>
</dbReference>
<dbReference type="PDBsum" id="2DL3"/>
<dbReference type="PDBsum" id="2ECZ"/>
<dbReference type="PDBsum" id="2LJ0"/>
<dbReference type="PDBsum" id="2LJ1"/>
<dbReference type="PDBsum" id="2MOX"/>
<dbReference type="PDBsum" id="2O2W"/>
<dbReference type="PDBsum" id="2O31"/>
<dbReference type="PDBsum" id="2O9S"/>
<dbReference type="PDBsum" id="2O9V"/>
<dbReference type="PDBsum" id="4LN2"/>
<dbReference type="PDBsum" id="4LNP"/>
<dbReference type="BMRB" id="Q9BX66"/>
<dbReference type="SMR" id="Q9BX66"/>
<dbReference type="BioGRID" id="115831">
    <property type="interactions" value="88"/>
</dbReference>
<dbReference type="CORUM" id="Q9BX66"/>
<dbReference type="FunCoup" id="Q9BX66">
    <property type="interactions" value="595"/>
</dbReference>
<dbReference type="IntAct" id="Q9BX66">
    <property type="interactions" value="63"/>
</dbReference>
<dbReference type="MINT" id="Q9BX66"/>
<dbReference type="STRING" id="9606.ENSP00000360293"/>
<dbReference type="GlyCosmos" id="Q9BX66">
    <property type="glycosylation" value="3 sites, 1 glycan"/>
</dbReference>
<dbReference type="GlyGen" id="Q9BX66">
    <property type="glycosylation" value="5 sites, 1 O-linked glycan (4 sites)"/>
</dbReference>
<dbReference type="iPTMnet" id="Q9BX66"/>
<dbReference type="PhosphoSitePlus" id="Q9BX66"/>
<dbReference type="BioMuta" id="SORBS1"/>
<dbReference type="DMDM" id="317373504"/>
<dbReference type="jPOST" id="Q9BX66"/>
<dbReference type="MassIVE" id="Q9BX66"/>
<dbReference type="PaxDb" id="9606-ENSP00000360293"/>
<dbReference type="PeptideAtlas" id="Q9BX66"/>
<dbReference type="ProteomicsDB" id="79354">
    <molecule id="Q9BX66-1"/>
</dbReference>
<dbReference type="ProteomicsDB" id="79355">
    <molecule id="Q9BX66-10"/>
</dbReference>
<dbReference type="ProteomicsDB" id="79356">
    <molecule id="Q9BX66-11"/>
</dbReference>
<dbReference type="ProteomicsDB" id="79357">
    <molecule id="Q9BX66-12"/>
</dbReference>
<dbReference type="ProteomicsDB" id="79358">
    <molecule id="Q9BX66-2"/>
</dbReference>
<dbReference type="ProteomicsDB" id="79359">
    <molecule id="Q9BX66-3"/>
</dbReference>
<dbReference type="ProteomicsDB" id="79360">
    <molecule id="Q9BX66-4"/>
</dbReference>
<dbReference type="ProteomicsDB" id="79361">
    <molecule id="Q9BX66-5"/>
</dbReference>
<dbReference type="ProteomicsDB" id="79362">
    <molecule id="Q9BX66-6"/>
</dbReference>
<dbReference type="ProteomicsDB" id="79363">
    <molecule id="Q9BX66-7"/>
</dbReference>
<dbReference type="ProteomicsDB" id="79364">
    <molecule id="Q9BX66-8"/>
</dbReference>
<dbReference type="ProteomicsDB" id="79365">
    <molecule id="Q9BX66-9"/>
</dbReference>
<dbReference type="Pumba" id="Q9BX66"/>
<dbReference type="ABCD" id="Q9BX66">
    <property type="antibodies" value="4 sequenced antibodies"/>
</dbReference>
<dbReference type="Antibodypedia" id="30624">
    <property type="antibodies" value="256 antibodies from 30 providers"/>
</dbReference>
<dbReference type="DNASU" id="10580"/>
<dbReference type="Ensembl" id="ENST00000277982.9">
    <molecule id="Q9BX66-2"/>
    <property type="protein sequence ID" value="ENSP00000277982.5"/>
    <property type="gene ID" value="ENSG00000095637.23"/>
</dbReference>
<dbReference type="Ensembl" id="ENST00000306402.10">
    <molecule id="Q9BX66-9"/>
    <property type="protein sequence ID" value="ENSP00000302556.6"/>
    <property type="gene ID" value="ENSG00000095637.23"/>
</dbReference>
<dbReference type="Ensembl" id="ENST00000354106.7">
    <molecule id="Q9BX66-5"/>
    <property type="protein sequence ID" value="ENSP00000277984.4"/>
    <property type="gene ID" value="ENSG00000095637.23"/>
</dbReference>
<dbReference type="Ensembl" id="ENST00000361941.7">
    <molecule id="Q9BX66-1"/>
    <property type="protein sequence ID" value="ENSP00000355136.3"/>
    <property type="gene ID" value="ENSG00000095637.23"/>
</dbReference>
<dbReference type="Ensembl" id="ENST00000371227.8">
    <molecule id="Q9BX66-11"/>
    <property type="protein sequence ID" value="ENSP00000360271.3"/>
    <property type="gene ID" value="ENSG00000095637.23"/>
</dbReference>
<dbReference type="Ensembl" id="ENST00000371239.5">
    <molecule id="Q9BX66-8"/>
    <property type="protein sequence ID" value="ENSP00000360283.1"/>
    <property type="gene ID" value="ENSG00000095637.23"/>
</dbReference>
<dbReference type="Ensembl" id="ENST00000371241.5">
    <molecule id="Q9BX66-4"/>
    <property type="protein sequence ID" value="ENSP00000360285.1"/>
    <property type="gene ID" value="ENSG00000095637.23"/>
</dbReference>
<dbReference type="Ensembl" id="ENST00000371245.7">
    <molecule id="Q9BX66-3"/>
    <property type="protein sequence ID" value="ENSP00000360291.2"/>
    <property type="gene ID" value="ENSG00000095637.23"/>
</dbReference>
<dbReference type="Ensembl" id="ENST00000371246.6">
    <molecule id="Q9BX66-2"/>
    <property type="protein sequence ID" value="ENSP00000360292.2"/>
    <property type="gene ID" value="ENSG00000095637.23"/>
</dbReference>
<dbReference type="Ensembl" id="ENST00000371247.7">
    <molecule id="Q9BX66-1"/>
    <property type="protein sequence ID" value="ENSP00000360293.2"/>
    <property type="gene ID" value="ENSG00000095637.23"/>
</dbReference>
<dbReference type="Ensembl" id="ENST00000371249.6">
    <molecule id="Q9BX66-10"/>
    <property type="protein sequence ID" value="ENSP00000360295.2"/>
    <property type="gene ID" value="ENSG00000095637.23"/>
</dbReference>
<dbReference type="Ensembl" id="ENST00000607232.5">
    <molecule id="Q9BX66-12"/>
    <property type="protein sequence ID" value="ENSP00000475901.1"/>
    <property type="gene ID" value="ENSG00000095637.23"/>
</dbReference>
<dbReference type="GeneID" id="10580"/>
<dbReference type="KEGG" id="hsa:10580"/>
<dbReference type="MANE-Select" id="ENST00000371247.7">
    <property type="protein sequence ID" value="ENSP00000360293.2"/>
    <property type="RefSeq nucleotide sequence ID" value="NM_001034954.3"/>
    <property type="RefSeq protein sequence ID" value="NP_001030126.2"/>
</dbReference>
<dbReference type="UCSC" id="uc001kko.4">
    <molecule id="Q9BX66-1"/>
    <property type="organism name" value="human"/>
</dbReference>
<dbReference type="AGR" id="HGNC:14565"/>
<dbReference type="CTD" id="10580"/>
<dbReference type="DisGeNET" id="10580"/>
<dbReference type="GeneCards" id="SORBS1"/>
<dbReference type="HGNC" id="HGNC:14565">
    <property type="gene designation" value="SORBS1"/>
</dbReference>
<dbReference type="HPA" id="ENSG00000095637">
    <property type="expression patterns" value="Low tissue specificity"/>
</dbReference>
<dbReference type="MalaCards" id="SORBS1"/>
<dbReference type="MIM" id="605264">
    <property type="type" value="gene"/>
</dbReference>
<dbReference type="neXtProt" id="NX_Q9BX66"/>
<dbReference type="OpenTargets" id="ENSG00000095637"/>
<dbReference type="PharmGKB" id="PA37899"/>
<dbReference type="VEuPathDB" id="HostDB:ENSG00000095637"/>
<dbReference type="eggNOG" id="KOG4225">
    <property type="taxonomic scope" value="Eukaryota"/>
</dbReference>
<dbReference type="GeneTree" id="ENSGT00940000158658"/>
<dbReference type="HOGENOM" id="CLU_003951_1_1_1"/>
<dbReference type="InParanoid" id="Q9BX66"/>
<dbReference type="OMA" id="XTSRRTR"/>
<dbReference type="OrthoDB" id="73680at2759"/>
<dbReference type="PAN-GO" id="Q9BX66">
    <property type="GO annotations" value="4 GO annotations based on evolutionary models"/>
</dbReference>
<dbReference type="PhylomeDB" id="Q9BX66"/>
<dbReference type="TreeFam" id="TF320680"/>
<dbReference type="PathwayCommons" id="Q9BX66"/>
<dbReference type="Reactome" id="R-HSA-445355">
    <property type="pathway name" value="Smooth Muscle Contraction"/>
</dbReference>
<dbReference type="SignaLink" id="Q9BX66"/>
<dbReference type="SIGNOR" id="Q9BX66"/>
<dbReference type="BioGRID-ORCS" id="10580">
    <property type="hits" value="14 hits in 1159 CRISPR screens"/>
</dbReference>
<dbReference type="CD-CODE" id="DEE660B4">
    <property type="entry name" value="Stress granule"/>
</dbReference>
<dbReference type="CD-CODE" id="FB4E32DD">
    <property type="entry name" value="Presynaptic clusters and postsynaptic densities"/>
</dbReference>
<dbReference type="ChiTaRS" id="SORBS1">
    <property type="organism name" value="human"/>
</dbReference>
<dbReference type="EvolutionaryTrace" id="Q9BX66"/>
<dbReference type="GeneWiki" id="SORBS1"/>
<dbReference type="GenomeRNAi" id="10580"/>
<dbReference type="Pharos" id="Q9BX66">
    <property type="development level" value="Tbio"/>
</dbReference>
<dbReference type="PRO" id="PR:Q9BX66"/>
<dbReference type="Proteomes" id="UP000005640">
    <property type="component" value="Chromosome 10"/>
</dbReference>
<dbReference type="RNAct" id="Q9BX66">
    <property type="molecule type" value="protein"/>
</dbReference>
<dbReference type="Bgee" id="ENSG00000095637">
    <property type="expression patterns" value="Expressed in blood vessel layer and 200 other cell types or tissues"/>
</dbReference>
<dbReference type="ExpressionAtlas" id="Q9BX66">
    <property type="expression patterns" value="baseline and differential"/>
</dbReference>
<dbReference type="GO" id="GO:0005912">
    <property type="term" value="C:adherens junction"/>
    <property type="evidence" value="ECO:0000250"/>
    <property type="project" value="UniProtKB"/>
</dbReference>
<dbReference type="GO" id="GO:0030055">
    <property type="term" value="C:cell-substrate junction"/>
    <property type="evidence" value="ECO:0000250"/>
    <property type="project" value="UniProtKB"/>
</dbReference>
<dbReference type="GO" id="GO:0005813">
    <property type="term" value="C:centrosome"/>
    <property type="evidence" value="ECO:0000314"/>
    <property type="project" value="HPA"/>
</dbReference>
<dbReference type="GO" id="GO:0005737">
    <property type="term" value="C:cytoplasm"/>
    <property type="evidence" value="ECO:0000318"/>
    <property type="project" value="GO_Central"/>
</dbReference>
<dbReference type="GO" id="GO:0005829">
    <property type="term" value="C:cytosol"/>
    <property type="evidence" value="ECO:0000250"/>
    <property type="project" value="BHF-UCL"/>
</dbReference>
<dbReference type="GO" id="GO:0016600">
    <property type="term" value="C:flotillin complex"/>
    <property type="evidence" value="ECO:0000250"/>
    <property type="project" value="BHF-UCL"/>
</dbReference>
<dbReference type="GO" id="GO:0005925">
    <property type="term" value="C:focal adhesion"/>
    <property type="evidence" value="ECO:0000314"/>
    <property type="project" value="HPA"/>
</dbReference>
<dbReference type="GO" id="GO:0045121">
    <property type="term" value="C:membrane raft"/>
    <property type="evidence" value="ECO:0000250"/>
    <property type="project" value="UniProtKB"/>
</dbReference>
<dbReference type="GO" id="GO:0016363">
    <property type="term" value="C:nuclear matrix"/>
    <property type="evidence" value="ECO:0007669"/>
    <property type="project" value="UniProtKB-SubCell"/>
</dbReference>
<dbReference type="GO" id="GO:0005634">
    <property type="term" value="C:nucleus"/>
    <property type="evidence" value="ECO:0000314"/>
    <property type="project" value="UniProtKB"/>
</dbReference>
<dbReference type="GO" id="GO:0005886">
    <property type="term" value="C:plasma membrane"/>
    <property type="evidence" value="ECO:0000314"/>
    <property type="project" value="HPA"/>
</dbReference>
<dbReference type="GO" id="GO:0001725">
    <property type="term" value="C:stress fiber"/>
    <property type="evidence" value="ECO:0000250"/>
    <property type="project" value="UniProtKB"/>
</dbReference>
<dbReference type="GO" id="GO:0005915">
    <property type="term" value="C:zonula adherens"/>
    <property type="evidence" value="ECO:0000304"/>
    <property type="project" value="ProtInc"/>
</dbReference>
<dbReference type="GO" id="GO:0003779">
    <property type="term" value="F:actin binding"/>
    <property type="evidence" value="ECO:0000304"/>
    <property type="project" value="ProtInc"/>
</dbReference>
<dbReference type="GO" id="GO:0008092">
    <property type="term" value="F:cytoskeletal protein binding"/>
    <property type="evidence" value="ECO:0000304"/>
    <property type="project" value="ProtInc"/>
</dbReference>
<dbReference type="GO" id="GO:0005158">
    <property type="term" value="F:insulin receptor binding"/>
    <property type="evidence" value="ECO:0000314"/>
    <property type="project" value="UniProtKB"/>
</dbReference>
<dbReference type="GO" id="GO:0030159">
    <property type="term" value="F:signaling receptor complex adaptor activity"/>
    <property type="evidence" value="ECO:0000314"/>
    <property type="project" value="BHF-UCL"/>
</dbReference>
<dbReference type="GO" id="GO:0007160">
    <property type="term" value="P:cell-matrix adhesion"/>
    <property type="evidence" value="ECO:0000304"/>
    <property type="project" value="ProtInc"/>
</dbReference>
<dbReference type="GO" id="GO:0031589">
    <property type="term" value="P:cell-substrate adhesion"/>
    <property type="evidence" value="ECO:0000318"/>
    <property type="project" value="GO_Central"/>
</dbReference>
<dbReference type="GO" id="GO:0032869">
    <property type="term" value="P:cellular response to insulin stimulus"/>
    <property type="evidence" value="ECO:0000250"/>
    <property type="project" value="BHF-UCL"/>
</dbReference>
<dbReference type="GO" id="GO:0048041">
    <property type="term" value="P:focal adhesion assembly"/>
    <property type="evidence" value="ECO:0000250"/>
    <property type="project" value="UniProtKB"/>
</dbReference>
<dbReference type="GO" id="GO:0008286">
    <property type="term" value="P:insulin receptor signaling pathway"/>
    <property type="evidence" value="ECO:0000250"/>
    <property type="project" value="UniProtKB"/>
</dbReference>
<dbReference type="GO" id="GO:0046326">
    <property type="term" value="P:positive regulation of D-glucose import"/>
    <property type="evidence" value="ECO:0000250"/>
    <property type="project" value="UniProtKB"/>
</dbReference>
<dbReference type="GO" id="GO:0045725">
    <property type="term" value="P:positive regulation of glycogen biosynthetic process"/>
    <property type="evidence" value="ECO:0000250"/>
    <property type="project" value="BHF-UCL"/>
</dbReference>
<dbReference type="GO" id="GO:0046628">
    <property type="term" value="P:positive regulation of insulin receptor signaling pathway"/>
    <property type="evidence" value="ECO:0000250"/>
    <property type="project" value="UniProtKB"/>
</dbReference>
<dbReference type="GO" id="GO:0046889">
    <property type="term" value="P:positive regulation of lipid biosynthetic process"/>
    <property type="evidence" value="ECO:0000250"/>
    <property type="project" value="BHF-UCL"/>
</dbReference>
<dbReference type="GO" id="GO:1903078">
    <property type="term" value="P:positive regulation of protein localization to plasma membrane"/>
    <property type="evidence" value="ECO:0000250"/>
    <property type="project" value="BHF-UCL"/>
</dbReference>
<dbReference type="GO" id="GO:0043149">
    <property type="term" value="P:stress fiber assembly"/>
    <property type="evidence" value="ECO:0000250"/>
    <property type="project" value="UniProtKB"/>
</dbReference>
<dbReference type="CDD" id="cd11919">
    <property type="entry name" value="SH3_Sorbs1_1"/>
    <property type="match status" value="1"/>
</dbReference>
<dbReference type="CDD" id="cd11922">
    <property type="entry name" value="SH3_Sorbs1_2"/>
    <property type="match status" value="1"/>
</dbReference>
<dbReference type="CDD" id="cd11916">
    <property type="entry name" value="SH3_Sorbs1_3"/>
    <property type="match status" value="1"/>
</dbReference>
<dbReference type="FunFam" id="2.30.30.40:FF:000001">
    <property type="entry name" value="Sorbin and SH3 domain-containing protein 1 isoform 2"/>
    <property type="match status" value="1"/>
</dbReference>
<dbReference type="FunFam" id="2.30.30.40:FF:000003">
    <property type="entry name" value="Sorbin and SH3 domain-containing protein 1 isoform 2"/>
    <property type="match status" value="1"/>
</dbReference>
<dbReference type="FunFam" id="2.30.30.40:FF:000004">
    <property type="entry name" value="Sorbin and SH3 domain-containing protein 1 isoform 2"/>
    <property type="match status" value="1"/>
</dbReference>
<dbReference type="Gene3D" id="2.30.30.40">
    <property type="entry name" value="SH3 Domains"/>
    <property type="match status" value="3"/>
</dbReference>
<dbReference type="InterPro" id="IPR050384">
    <property type="entry name" value="Endophilin_SH3RF"/>
</dbReference>
<dbReference type="InterPro" id="IPR036028">
    <property type="entry name" value="SH3-like_dom_sf"/>
</dbReference>
<dbReference type="InterPro" id="IPR001452">
    <property type="entry name" value="SH3_domain"/>
</dbReference>
<dbReference type="InterPro" id="IPR003127">
    <property type="entry name" value="SoHo_dom"/>
</dbReference>
<dbReference type="InterPro" id="IPR035606">
    <property type="entry name" value="SORBS1_SH3"/>
</dbReference>
<dbReference type="InterPro" id="IPR035610">
    <property type="entry name" value="SORBS1_SH3_1"/>
</dbReference>
<dbReference type="InterPro" id="IPR035611">
    <property type="entry name" value="SORBS1_SH3_2"/>
</dbReference>
<dbReference type="PANTHER" id="PTHR14167">
    <property type="entry name" value="SH3 DOMAIN-CONTAINING"/>
    <property type="match status" value="1"/>
</dbReference>
<dbReference type="PANTHER" id="PTHR14167:SF64">
    <property type="entry name" value="SORBIN AND SH3 DOMAIN-CONTAINING PROTEIN 1"/>
    <property type="match status" value="1"/>
</dbReference>
<dbReference type="Pfam" id="PF00018">
    <property type="entry name" value="SH3_1"/>
    <property type="match status" value="1"/>
</dbReference>
<dbReference type="Pfam" id="PF07653">
    <property type="entry name" value="SH3_2"/>
    <property type="match status" value="1"/>
</dbReference>
<dbReference type="Pfam" id="PF14604">
    <property type="entry name" value="SH3_9"/>
    <property type="match status" value="1"/>
</dbReference>
<dbReference type="Pfam" id="PF02208">
    <property type="entry name" value="Sorb"/>
    <property type="match status" value="1"/>
</dbReference>
<dbReference type="SMART" id="SM00326">
    <property type="entry name" value="SH3"/>
    <property type="match status" value="3"/>
</dbReference>
<dbReference type="SMART" id="SM00459">
    <property type="entry name" value="Sorb"/>
    <property type="match status" value="1"/>
</dbReference>
<dbReference type="SUPFAM" id="SSF50044">
    <property type="entry name" value="SH3-domain"/>
    <property type="match status" value="3"/>
</dbReference>
<dbReference type="PROSITE" id="PS50002">
    <property type="entry name" value="SH3"/>
    <property type="match status" value="3"/>
</dbReference>
<dbReference type="PROSITE" id="PS50831">
    <property type="entry name" value="SOHO"/>
    <property type="match status" value="1"/>
</dbReference>
<keyword id="KW-0002">3D-structure</keyword>
<keyword id="KW-0025">Alternative splicing</keyword>
<keyword id="KW-0965">Cell junction</keyword>
<keyword id="KW-1003">Cell membrane</keyword>
<keyword id="KW-0963">Cytoplasm</keyword>
<keyword id="KW-0206">Cytoskeleton</keyword>
<keyword id="KW-0325">Glycoprotein</keyword>
<keyword id="KW-0472">Membrane</keyword>
<keyword id="KW-0539">Nucleus</keyword>
<keyword id="KW-0597">Phosphoprotein</keyword>
<keyword id="KW-1267">Proteomics identification</keyword>
<keyword id="KW-1185">Reference proteome</keyword>
<keyword id="KW-0677">Repeat</keyword>
<keyword id="KW-0728">SH3 domain</keyword>
<keyword id="KW-0813">Transport</keyword>
<feature type="chain" id="PRO_0000072185" description="Sorbin and SH3 domain-containing protein 1">
    <location>
        <begin position="1"/>
        <end position="1292"/>
    </location>
</feature>
<feature type="domain" description="SoHo" evidence="5">
    <location>
        <begin position="366"/>
        <end position="469"/>
    </location>
</feature>
<feature type="domain" description="SH3 1" evidence="4">
    <location>
        <begin position="793"/>
        <end position="852"/>
    </location>
</feature>
<feature type="domain" description="SH3 2" evidence="4">
    <location>
        <begin position="867"/>
        <end position="928"/>
    </location>
</feature>
<feature type="domain" description="SH3 3" evidence="4">
    <location>
        <begin position="1231"/>
        <end position="1292"/>
    </location>
</feature>
<feature type="region of interest" description="Disordered" evidence="6">
    <location>
        <begin position="1"/>
        <end position="29"/>
    </location>
</feature>
<feature type="region of interest" description="Disordered" evidence="6">
    <location>
        <begin position="73"/>
        <end position="158"/>
    </location>
</feature>
<feature type="region of interest" description="Disordered" evidence="6">
    <location>
        <begin position="214"/>
        <end position="275"/>
    </location>
</feature>
<feature type="region of interest" description="Disordered" evidence="6">
    <location>
        <begin position="318"/>
        <end position="381"/>
    </location>
</feature>
<feature type="region of interest" description="Disordered" evidence="6">
    <location>
        <begin position="405"/>
        <end position="534"/>
    </location>
</feature>
<feature type="region of interest" description="Disordered" evidence="6">
    <location>
        <begin position="628"/>
        <end position="650"/>
    </location>
</feature>
<feature type="region of interest" description="Disordered" evidence="6">
    <location>
        <begin position="692"/>
        <end position="716"/>
    </location>
</feature>
<feature type="region of interest" description="Disordered" evidence="6">
    <location>
        <begin position="944"/>
        <end position="976"/>
    </location>
</feature>
<feature type="region of interest" description="Disordered" evidence="6">
    <location>
        <begin position="1041"/>
        <end position="1064"/>
    </location>
</feature>
<feature type="region of interest" description="Disordered" evidence="6">
    <location>
        <begin position="1106"/>
        <end position="1150"/>
    </location>
</feature>
<feature type="region of interest" description="Disordered" evidence="6">
    <location>
        <begin position="1162"/>
        <end position="1230"/>
    </location>
</feature>
<feature type="compositionally biased region" description="Low complexity" evidence="6">
    <location>
        <begin position="74"/>
        <end position="89"/>
    </location>
</feature>
<feature type="compositionally biased region" description="Basic and acidic residues" evidence="6">
    <location>
        <begin position="93"/>
        <end position="102"/>
    </location>
</feature>
<feature type="compositionally biased region" description="Polar residues" evidence="6">
    <location>
        <begin position="114"/>
        <end position="128"/>
    </location>
</feature>
<feature type="compositionally biased region" description="Pro residues" evidence="6">
    <location>
        <begin position="240"/>
        <end position="252"/>
    </location>
</feature>
<feature type="compositionally biased region" description="Polar residues" evidence="6">
    <location>
        <begin position="266"/>
        <end position="275"/>
    </location>
</feature>
<feature type="compositionally biased region" description="Basic and acidic residues" evidence="6">
    <location>
        <begin position="354"/>
        <end position="365"/>
    </location>
</feature>
<feature type="compositionally biased region" description="Polar residues" evidence="6">
    <location>
        <begin position="437"/>
        <end position="450"/>
    </location>
</feature>
<feature type="compositionally biased region" description="Basic and acidic residues" evidence="6">
    <location>
        <begin position="510"/>
        <end position="534"/>
    </location>
</feature>
<feature type="compositionally biased region" description="Low complexity" evidence="6">
    <location>
        <begin position="944"/>
        <end position="954"/>
    </location>
</feature>
<feature type="compositionally biased region" description="Polar residues" evidence="6">
    <location>
        <begin position="955"/>
        <end position="971"/>
    </location>
</feature>
<feature type="compositionally biased region" description="Polar residues" evidence="6">
    <location>
        <begin position="1106"/>
        <end position="1117"/>
    </location>
</feature>
<feature type="compositionally biased region" description="Basic and acidic residues" evidence="6">
    <location>
        <begin position="1119"/>
        <end position="1136"/>
    </location>
</feature>
<feature type="compositionally biased region" description="Polar residues" evidence="6">
    <location>
        <begin position="1162"/>
        <end position="1172"/>
    </location>
</feature>
<feature type="compositionally biased region" description="Basic and acidic residues" evidence="6">
    <location>
        <begin position="1192"/>
        <end position="1203"/>
    </location>
</feature>
<feature type="compositionally biased region" description="Polar residues" evidence="6">
    <location>
        <begin position="1211"/>
        <end position="1230"/>
    </location>
</feature>
<feature type="modified residue" description="Phosphothreonine" evidence="3">
    <location>
        <position position="82"/>
    </location>
</feature>
<feature type="modified residue" description="Phosphoserine" evidence="34">
    <location>
        <position position="86"/>
    </location>
</feature>
<feature type="modified residue" description="Phosphoserine" evidence="34 36">
    <location>
        <position position="89"/>
    </location>
</feature>
<feature type="modified residue" description="Phosphoserine" evidence="37">
    <location>
        <position position="242"/>
    </location>
</feature>
<feature type="modified residue" description="Phosphoserine" evidence="37">
    <location>
        <position position="259"/>
    </location>
</feature>
<feature type="modified residue" description="Phosphoserine" evidence="37">
    <location>
        <position position="341"/>
    </location>
</feature>
<feature type="modified residue" description="Phosphothreonine" evidence="3">
    <location>
        <position position="344"/>
    </location>
</feature>
<feature type="modified residue" description="Phosphoserine" evidence="36 37">
    <location>
        <position position="350"/>
    </location>
</feature>
<feature type="modified residue" description="Phosphoserine" evidence="3">
    <location>
        <position position="369"/>
    </location>
</feature>
<feature type="modified residue" description="Phosphoserine" evidence="3">
    <location>
        <position position="374"/>
    </location>
</feature>
<feature type="modified residue" description="Phosphoserine" evidence="2">
    <location>
        <position position="465"/>
    </location>
</feature>
<feature type="modified residue" description="Phosphoserine" evidence="34">
    <location>
        <position position="472"/>
    </location>
</feature>
<feature type="modified residue" description="Phosphoserine" evidence="35">
    <location>
        <position position="481"/>
    </location>
</feature>
<feature type="modified residue" description="Phosphotyrosine; by ABL1" evidence="3">
    <location>
        <position position="536"/>
    </location>
</feature>
<feature type="modified residue" description="Phosphoserine" evidence="37">
    <location>
        <position position="556"/>
    </location>
</feature>
<feature type="modified residue" description="Phosphoserine" evidence="3">
    <location>
        <position position="609"/>
    </location>
</feature>
<feature type="modified residue" description="Phosphoserine" evidence="3">
    <location>
        <position position="640"/>
    </location>
</feature>
<feature type="modified residue" description="Phosphotyrosine; by ABL1" evidence="3">
    <location>
        <position position="654"/>
    </location>
</feature>
<feature type="modified residue" description="Phosphoserine" evidence="34 36 37">
    <location>
        <position position="665"/>
    </location>
</feature>
<feature type="modified residue" description="Phosphothreonine" evidence="37">
    <location>
        <position position="708"/>
    </location>
</feature>
<feature type="modified residue" description="Phosphoserine" evidence="3">
    <location>
        <position position="713"/>
    </location>
</feature>
<feature type="modified residue" description="Phosphothreonine" evidence="34 37">
    <location>
        <position position="862"/>
    </location>
</feature>
<feature type="modified residue" description="Phosphotyrosine" evidence="37">
    <location>
        <position position="937"/>
    </location>
</feature>
<feature type="modified residue" description="Phosphoserine" evidence="34">
    <location>
        <position position="945"/>
    </location>
</feature>
<feature type="modified residue" description="Phosphoserine" evidence="3">
    <location>
        <position position="953"/>
    </location>
</feature>
<feature type="modified residue" description="Phosphotyrosine; by ABL1" evidence="3">
    <location>
        <position position="1240"/>
    </location>
</feature>
<feature type="splice variant" id="VSP_050895" description="In isoform 4, isoform 7, isoform 8, isoform 10 and isoform 12." evidence="17 18 19 22">
    <location>
        <begin position="26"/>
        <end position="57"/>
    </location>
</feature>
<feature type="splice variant" id="VSP_050896" description="In isoform 4, isoform 5, isoform 6 and isoform 7." evidence="19 20 21 22">
    <location>
        <begin position="101"/>
        <end position="109"/>
    </location>
</feature>
<feature type="splice variant" id="VSP_050898" description="In isoform 3." evidence="19">
    <location>
        <begin position="147"/>
        <end position="215"/>
    </location>
</feature>
<feature type="splice variant" id="VSP_050899" description="In isoform 4, isoform 6, isoform 8, isoform 9 and isoform 12." evidence="16 18 19 21 22">
    <location>
        <begin position="148"/>
        <end position="270"/>
    </location>
</feature>
<feature type="splice variant" id="VSP_041193" description="In isoform 12." evidence="24">
    <location>
        <begin position="319"/>
        <end position="328"/>
    </location>
</feature>
<feature type="splice variant" id="VSP_050900" description="In isoform 3, isoform 4, isoform 7, isoform 8, isoform 9, isoform 10, isoform 11 and isoform 12." evidence="16 17 18 19 22 23">
    <location>
        <begin position="408"/>
        <end position="453"/>
    </location>
</feature>
<feature type="splice variant" id="VSP_050901" description="In isoform 5." evidence="18 19 20">
    <location>
        <begin position="431"/>
        <end position="451"/>
    </location>
</feature>
<feature type="splice variant" id="VSP_050902" description="In isoform 2." evidence="19">
    <original>DNPYTPTYQFPASTPSPKSE</original>
    <variation>TKSCSVMSPRLECSGTVIAHCSLKLLDSSNPPTSASQVAGTA</variation>
    <location>
        <begin position="434"/>
        <end position="453"/>
    </location>
</feature>
<feature type="splice variant" id="VSP_050903" description="In isoform 4, isoform 7, isoform 9 and isoform 10." evidence="16 17 19 22">
    <location>
        <begin position="552"/>
        <end position="635"/>
    </location>
</feature>
<feature type="splice variant" id="VSP_050905" description="In isoform 6." evidence="21">
    <location>
        <begin position="580"/>
        <end position="635"/>
    </location>
</feature>
<feature type="splice variant" id="VSP_050904" description="In isoform 8 and isoform 12." evidence="18">
    <location>
        <begin position="580"/>
        <end position="601"/>
    </location>
</feature>
<feature type="splice variant" id="VSP_050906" description="In isoform 3." evidence="19">
    <location>
        <begin position="602"/>
        <end position="635"/>
    </location>
</feature>
<feature type="splice variant" id="VSP_041194" description="In isoform 12." evidence="24">
    <original>K</original>
    <variation>KVDRKGGNAHMISSSSVHSRTFNTSNALGPVCKHKKPLSAAKACISEILPSKFKPRLSAPSALLQEQKSILLPSEKAQSCENLCVSGSLNDSKRGLPLQVGGSIENLLMRSRRDYDSKSSSTMSLQEYSTSGRRPCPLSRKAGMQFTMLYRDMHQINRSGLFLGSISSSSSVRDLASHFEKSSLALSRGELGPSQEGSEHIPKHTVSSRITAFEQLIQRSRSMPSLDLSGRLSKSPTPVLSRGSLTSARSAESLLESTKLHPKEMDGMNSSGVYASPTCSNMAHHALSFRGLVPSEPLSTCSDDVDRCSNISTDSREGSGGSVHGDFPKHRLNKCKGTCPASYTRFTTIRKHEQQQTSRQPEWRLDARGDKSTLLRNIYLMSPLPFRLKKPLHHHPRQPSPGDSSGLLVGQKPDLPSQPHQDQPPSGGKPVVPTRLSSRHTMARLSRSSEPSQERPTALEDYPRAINNGNSVPYSDHSLDRNNNPQSELAPSRG</variation>
    <location>
        <position position="709"/>
    </location>
</feature>
<feature type="splice variant" id="VSP_050907" description="In isoform 4 and isoform 10." evidence="17 19">
    <location>
        <begin position="738"/>
        <end position="793"/>
    </location>
</feature>
<feature type="splice variant" id="VSP_050908" description="In isoform 7." evidence="22">
    <original>MRPAR</original>
    <variation>KYDWA</variation>
    <location>
        <begin position="795"/>
        <end position="799"/>
    </location>
</feature>
<feature type="splice variant" id="VSP_050909" description="In isoform 7." evidence="22">
    <location>
        <begin position="800"/>
        <end position="1292"/>
    </location>
</feature>
<feature type="splice variant" id="VSP_050911" description="In isoform 4, isoform 5, isoform 6, isoform 8, isoform 9, isoform 10 and isoform 12." evidence="16 17 18 19 20 21 22">
    <location>
        <begin position="955"/>
        <end position="1212"/>
    </location>
</feature>
<feature type="splice variant" id="VSP_050910" description="In isoform 2." evidence="19">
    <location>
        <begin position="955"/>
        <end position="1117"/>
    </location>
</feature>
<feature type="splice variant" id="VSP_050912" description="In isoform 3." evidence="19">
    <original>FSSHSKLITPAPSSLPHSRR</original>
    <variation>LSHHSLRAGPDLTESEKSYV</variation>
    <location>
        <begin position="956"/>
        <end position="975"/>
    </location>
</feature>
<feature type="splice variant" id="VSP_050913" description="In isoform 3." evidence="19">
    <location>
        <begin position="976"/>
        <end position="1213"/>
    </location>
</feature>
<feature type="splice variant" id="VSP_039210" description="In isoform 11." evidence="23">
    <original>Q</original>
    <variation>QLSHHSLRAGPDLTESEKSYV</variation>
    <location>
        <position position="1213"/>
    </location>
</feature>
<feature type="sequence variant" id="VAR_047652" description="In dbSNP:rs943542." evidence="7 8 9 10 11 12 13 15">
    <original>L</original>
    <variation>P</variation>
    <location>
        <position position="61"/>
    </location>
</feature>
<feature type="sequence variant" id="VAR_019653" description="In dbSNP:rs757431022." evidence="11">
    <original>R</original>
    <variation>W</variation>
    <location>
        <position position="74"/>
    </location>
</feature>
<feature type="sequence variant" id="VAR_047653" description="In dbSNP:rs7081076.">
    <original>G</original>
    <variation>V</variation>
    <location>
        <position position="175"/>
    </location>
</feature>
<feature type="sequence variant" id="VAR_035661" description="In a breast cancer sample; somatic mutation." evidence="14">
    <original>T</original>
    <variation>A</variation>
    <location>
        <position position="195"/>
    </location>
</feature>
<feature type="sequence variant" id="VAR_019654" description="Has a protective role in both obesity and diabetes; dbSNP:rs2281939." evidence="11">
    <original>T</original>
    <variation>A</variation>
    <location>
        <position position="237"/>
    </location>
</feature>
<feature type="sequence variant" id="VAR_047654" description="In dbSNP:rs35808802.">
    <original>Y</original>
    <variation>C</variation>
    <location>
        <position position="485"/>
    </location>
</feature>
<feature type="sequence conflict" description="In Ref. 5; CAJ97431." evidence="24" ref="5">
    <original>S</original>
    <variation>P</variation>
    <location>
        <position position="9"/>
    </location>
</feature>
<feature type="sequence conflict" description="In Ref. 1; AAD27647 and 3; AAF22175." evidence="24" ref="1 3">
    <original>P</original>
    <variation>S</variation>
    <location>
        <position position="18"/>
    </location>
</feature>
<feature type="sequence conflict" description="In Ref. 1; AAD27647 and 3; AAF22175." evidence="24" ref="1 3">
    <original>D</original>
    <variation>G</variation>
    <location>
        <position position="110"/>
    </location>
</feature>
<feature type="sequence conflict" description="In Ref. 1; AAD27647 and 3; AAF22175." evidence="24" ref="1 3">
    <original>R</original>
    <variation>K</variation>
    <location>
        <position position="113"/>
    </location>
</feature>
<feature type="sequence conflict" description="In Ref. 1; AAD27647 and 3; AAF22175." evidence="24" ref="1 3">
    <original>A</original>
    <variation>V</variation>
    <location>
        <position position="131"/>
    </location>
</feature>
<feature type="sequence conflict" description="In Ref. 1; AAD27647 and 3; AAF22175." evidence="24" ref="1 3">
    <original>Y</original>
    <variation>S</variation>
    <location>
        <position position="134"/>
    </location>
</feature>
<feature type="sequence conflict" description="In Ref. 3; AAF22175." evidence="24" ref="3">
    <original>RAS</original>
    <variation>SAC</variation>
    <location>
        <begin position="226"/>
        <end position="228"/>
    </location>
</feature>
<feature type="sequence conflict" description="In Ref. 3; AAF22175." evidence="24" ref="3">
    <original>T</original>
    <variation>P</variation>
    <location>
        <position position="264"/>
    </location>
</feature>
<feature type="sequence conflict" description="In Ref. 1; AAD27647 and 3; AAF22175." evidence="24" ref="1 3">
    <original>PSVS</original>
    <variation>SSEC</variation>
    <location>
        <begin position="292"/>
        <end position="295"/>
    </location>
</feature>
<feature type="sequence conflict" description="In Ref. 3; AAF22175." evidence="24" ref="3">
    <original>S</original>
    <variation>R</variation>
    <location>
        <position position="481"/>
    </location>
</feature>
<feature type="sequence conflict" description="In Ref. 1; AAD27647 and 3; AAF22175." evidence="24" ref="1 3">
    <original>E</original>
    <variation>V</variation>
    <location>
        <position position="489"/>
    </location>
</feature>
<feature type="sequence conflict" description="In Ref. 3; AAF22175." evidence="24" ref="3">
    <original>D</original>
    <variation>E</variation>
    <location>
        <position position="607"/>
    </location>
</feature>
<feature type="sequence conflict" description="In Ref. 3; AAF22175." evidence="24" ref="3">
    <original>L</original>
    <variation>F</variation>
    <location>
        <position position="610"/>
    </location>
</feature>
<feature type="sequence conflict" description="In Ref. 1; AAD27647 and 3; AAF22175." evidence="24" ref="1 3">
    <original>E</original>
    <variation>G</variation>
    <location>
        <position position="644"/>
    </location>
</feature>
<feature type="sequence conflict" description="In Ref. 1; AAD27647 and 3; AAF22175." evidence="24" ref="1 3">
    <original>R</original>
    <variation>S</variation>
    <location>
        <position position="679"/>
    </location>
</feature>
<feature type="sequence conflict" description="In Ref. 1; AAD27647 and 3; AAF22175." evidence="24" ref="1 3">
    <original>D</original>
    <variation>V</variation>
    <location>
        <position position="690"/>
    </location>
</feature>
<feature type="sequence conflict" description="In Ref. 5; CAJ97431." evidence="24" ref="5">
    <original>Q</original>
    <variation>R</variation>
    <location>
        <position position="694"/>
    </location>
</feature>
<feature type="sequence conflict" description="In Ref. 1; AAD27647 and 3; AAF22175." evidence="24" ref="1 3">
    <original>G</original>
    <variation>D</variation>
    <location>
        <position position="695"/>
    </location>
</feature>
<feature type="sequence conflict" description="In Ref. 1; AAD27647 and 3; AAF22175." evidence="24" ref="1 3">
    <original>D</original>
    <variation>N</variation>
    <location>
        <position position="710"/>
    </location>
</feature>
<feature type="sequence conflict" description="In Ref. 1; AAK37563/AAK37564." evidence="24" ref="1">
    <original>V</original>
    <variation>G</variation>
    <location>
        <position position="1156"/>
    </location>
</feature>
<feature type="strand" evidence="42">
    <location>
        <begin position="796"/>
        <end position="802"/>
    </location>
</feature>
<feature type="strand" evidence="40">
    <location>
        <begin position="808"/>
        <end position="811"/>
    </location>
</feature>
<feature type="strand" evidence="42">
    <location>
        <begin position="819"/>
        <end position="825"/>
    </location>
</feature>
<feature type="strand" evidence="42">
    <location>
        <begin position="827"/>
        <end position="835"/>
    </location>
</feature>
<feature type="strand" evidence="42">
    <location>
        <begin position="838"/>
        <end position="843"/>
    </location>
</feature>
<feature type="helix" evidence="42">
    <location>
        <begin position="844"/>
        <end position="846"/>
    </location>
</feature>
<feature type="strand" evidence="42">
    <location>
        <begin position="847"/>
        <end position="849"/>
    </location>
</feature>
<feature type="strand" evidence="40">
    <location>
        <begin position="863"/>
        <end position="865"/>
    </location>
</feature>
<feature type="strand" evidence="41">
    <location>
        <begin position="870"/>
        <end position="874"/>
    </location>
</feature>
<feature type="strand" evidence="40">
    <location>
        <begin position="882"/>
        <end position="885"/>
    </location>
</feature>
<feature type="strand" evidence="41">
    <location>
        <begin position="893"/>
        <end position="899"/>
    </location>
</feature>
<feature type="strand" evidence="41">
    <location>
        <begin position="901"/>
        <end position="908"/>
    </location>
</feature>
<feature type="turn" evidence="38">
    <location>
        <begin position="910"/>
        <end position="912"/>
    </location>
</feature>
<feature type="strand" evidence="41">
    <location>
        <begin position="915"/>
        <end position="919"/>
    </location>
</feature>
<feature type="helix" evidence="41">
    <location>
        <begin position="920"/>
        <end position="922"/>
    </location>
</feature>
<feature type="strand" evidence="41">
    <location>
        <begin position="923"/>
        <end position="927"/>
    </location>
</feature>
<feature type="strand" evidence="39">
    <location>
        <begin position="1230"/>
        <end position="1233"/>
    </location>
</feature>
<feature type="strand" evidence="39">
    <location>
        <begin position="1235"/>
        <end position="1240"/>
    </location>
</feature>
<feature type="strand" evidence="39">
    <location>
        <begin position="1257"/>
        <end position="1263"/>
    </location>
</feature>
<feature type="strand" evidence="39">
    <location>
        <begin position="1267"/>
        <end position="1273"/>
    </location>
</feature>
<feature type="turn" evidence="39">
    <location>
        <begin position="1274"/>
        <end position="1276"/>
    </location>
</feature>
<feature type="strand" evidence="39">
    <location>
        <begin position="1279"/>
        <end position="1283"/>
    </location>
</feature>
<feature type="strand" evidence="39">
    <location>
        <begin position="1286"/>
        <end position="1289"/>
    </location>
</feature>
<feature type="sequence conflict" description="In Ref. 1; AAK37564." evidence="24" ref="1">
    <original>K</original>
    <variation>E</variation>
    <location sequence="Q9BX66-2">
        <position position="435"/>
    </location>
</feature>
<feature type="sequence conflict" description="In Ref. 1; AAK37564." evidence="24" ref="1">
    <original>AHCS</original>
    <variation>SRCG</variation>
    <location sequence="Q9BX66-2">
        <begin position="452"/>
        <end position="455"/>
    </location>
</feature>
<feature type="sequence conflict" description="In Ref. 1; AAK37564." evidence="24" ref="1">
    <original>N</original>
    <variation>D</variation>
    <location sequence="Q9BX66-2">
        <position position="463"/>
    </location>
</feature>
<feature type="modified residue" description="Phosphoserine" evidence="37">
    <location sequence="Q9BX66-4">
        <position position="105"/>
    </location>
</feature>
<feature type="modified residue" description="Phosphoserine" evidence="34">
    <location sequence="Q9BX66-4">
        <position position="346"/>
    </location>
</feature>
<feature type="modified residue" description="Phosphoserine" evidence="34">
    <location sequence="Q9BX66-4">
        <position position="603"/>
    </location>
</feature>
<feature type="modified residue" description="Phosphoserine" evidence="34">
    <location sequence="Q9BX66-5">
        <position position="923"/>
    </location>
</feature>
<feature type="modified residue" description="Phosphoserine" evidence="37">
    <location sequence="Q9BX66-6">
        <position position="137"/>
    </location>
</feature>
<feature type="modified residue" description="Phosphoserine" evidence="37">
    <location sequence="Q9BX66-6">
        <position position="452"/>
    </location>
</feature>
<feature type="modified residue" description="Phosphoserine" evidence="34">
    <location sequence="Q9BX66-6">
        <position position="765"/>
    </location>
</feature>
<feature type="modified residue" description="Phosphoserine" evidence="34">
    <location sequence="Q9BX66-7">
        <position position="469"/>
    </location>
</feature>
<feature type="modified residue" description="Phosphoserine" evidence="37">
    <location sequence="Q9BX66-8">
        <position position="114"/>
    </location>
</feature>
<feature type="modified residue" description="Phosphoserine" evidence="34">
    <location sequence="Q9BX66-8">
        <position position="730"/>
    </location>
</feature>
<feature type="modified residue" description="Phosphoserine" evidence="37">
    <location sequence="Q9BX66-9">
        <position position="146"/>
    </location>
</feature>
<feature type="modified residue" description="Phosphoserine" evidence="34">
    <location sequence="Q9BX66-9">
        <position position="387"/>
    </location>
</feature>
<feature type="modified residue" description="Phosphoserine" evidence="34">
    <location sequence="Q9BX66-9">
        <position position="700"/>
    </location>
</feature>
<feature type="modified residue" description="Phosphoserine" evidence="34">
    <location sequence="Q9BX66-10">
        <position position="478"/>
    </location>
</feature>
<feature type="modified residue" description="Phosphoserine" evidence="34">
    <location sequence="Q9BX66-10">
        <position position="735"/>
    </location>
</feature>
<feature type="modified residue" description="Phosphoserine" evidence="37">
    <location sequence="Q9BX66-12">
        <position position="114"/>
    </location>
</feature>
<feature type="modified residue" description="Phosphoserine" evidence="34">
    <location sequence="Q9BX66-12">
        <position position="1213"/>
    </location>
</feature>
<accession>Q9BX66</accession>
<accession>A0AED4</accession>
<accession>A6NEK3</accession>
<accession>A6NID8</accession>
<accession>A6NJS4</accession>
<accession>A7MD40</accession>
<accession>D3DR42</accession>
<accession>O43857</accession>
<accession>Q5T923</accession>
<accession>Q5T924</accession>
<accession>Q5T927</accession>
<accession>Q5T928</accession>
<accession>Q5T929</accession>
<accession>Q5T930</accession>
<accession>Q5T931</accession>
<accession>Q5T932</accession>
<accession>Q7LBE5</accession>
<accession>Q8IVK0</accession>
<accession>Q8IVQ4</accession>
<accession>Q96KF3</accession>
<accession>Q96KF4</accession>
<accession>Q9BX64</accession>
<accession>Q9BX65</accession>
<accession>Q9P2Q0</accession>
<accession>Q9UFT2</accession>
<accession>Q9UHN7</accession>
<accession>Q9Y338</accession>
<protein>
    <recommendedName>
        <fullName>Sorbin and SH3 domain-containing protein 1</fullName>
    </recommendedName>
    <alternativeName>
        <fullName>Ponsin</fullName>
    </alternativeName>
    <alternativeName>
        <fullName>SH3 domain protein 5</fullName>
    </alternativeName>
    <alternativeName>
        <fullName>SH3P12</fullName>
    </alternativeName>
    <alternativeName>
        <fullName>c-Cbl-associated protein</fullName>
        <shortName>CAP</shortName>
    </alternativeName>
</protein>
<comment type="function">
    <text evidence="3">Plays a role in tyrosine phosphorylation of CBL by linking CBL to the insulin receptor. Required for insulin-stimulated glucose transport. Involved in formation of actin stress fibers and focal adhesions (By similarity).</text>
</comment>
<comment type="subunit">
    <text evidence="1 9 10 12 15">Interacts (via third SH3 domain) with the Ten-1 ICD form of TENM1; the interaction induces the translocation of SORBS1 to the nucleus. Interacts with INSM1 (By similarity). Interacts with the long isoform of AFDN and with VCL. AFDN and VCL bind to SORBS1 in a competitive manner and do not form a ternary complex. Interacts with ABL1, CBL, CBLB and INPPL1/SHIP2 through the third SH3 domain. Interaction with ABL1 occurs only after insulin stimulation while this has no effect on the interaction with INPPL1. Interacts with the insulin receptor but dissociates from it following insulin stimulation. Also interacts with SCA7, PTK2/FAK1 and flotillin. Interacts (via SH3 domain 2) with PXN.</text>
</comment>
<comment type="interaction">
    <interactant intactId="EBI-433642">
        <id>Q9BX66</id>
    </interactant>
    <interactant intactId="EBI-375543">
        <id>P00519</id>
        <label>ABL1</label>
    </interactant>
    <organismsDiffer>false</organismsDiffer>
    <experiments>2</experiments>
</comment>
<comment type="interaction">
    <interactant intactId="EBI-433642">
        <id>Q9BX66</id>
    </interactant>
    <interactant intactId="EBI-708350">
        <id>O15265</id>
        <label>ATXN7</label>
    </interactant>
    <organismsDiffer>false</organismsDiffer>
    <experiments>15</experiments>
</comment>
<comment type="interaction">
    <interactant intactId="EBI-433642">
        <id>Q9BX66</id>
    </interactant>
    <interactant intactId="EBI-466029">
        <id>P42858</id>
        <label>HTT</label>
    </interactant>
    <organismsDiffer>false</organismsDiffer>
    <experiments>4</experiments>
</comment>
<comment type="interaction">
    <interactant intactId="EBI-433642">
        <id>Q9BX66</id>
    </interactant>
    <interactant intactId="EBI-1384248">
        <id>O15357</id>
        <label>INPPL1</label>
    </interactant>
    <organismsDiffer>false</organismsDiffer>
    <experiments>5</experiments>
</comment>
<comment type="interaction">
    <interactant intactId="EBI-433642">
        <id>Q9BX66</id>
    </interactant>
    <interactant intactId="EBI-1045887">
        <id>Q13177</id>
        <label>PAK2</label>
    </interactant>
    <organismsDiffer>false</organismsDiffer>
    <experiments>2</experiments>
</comment>
<comment type="interaction">
    <interactant intactId="EBI-433642">
        <id>Q9BX66</id>
    </interactant>
    <interactant intactId="EBI-21369851">
        <id>Q6NSK7</id>
        <label>RIN3</label>
    </interactant>
    <organismsDiffer>false</organismsDiffer>
    <experiments>3</experiments>
</comment>
<comment type="interaction">
    <interactant intactId="EBI-433642">
        <id>Q9BX66</id>
    </interactant>
    <interactant intactId="EBI-349613">
        <id>P39052</id>
        <label>Dnm2</label>
    </interactant>
    <organismsDiffer>true</organismsDiffer>
    <experiments>5</experiments>
</comment>
<comment type="interaction">
    <interactant intactId="EBI-433642">
        <id>Q9BX66</id>
    </interactant>
    <interactant intactId="EBI-2504267">
        <id>A0A061I5T4</id>
        <label>H671_4g13114</label>
    </interactant>
    <organismsDiffer>true</organismsDiffer>
    <experiments>2</experiments>
</comment>
<comment type="interaction">
    <interactant intactId="EBI-17775963">
        <id>Q9BX66-7</id>
    </interactant>
    <interactant intactId="EBI-743502">
        <id>Q8WWV3</id>
        <label>RTN4IP1</label>
    </interactant>
    <organismsDiffer>false</organismsDiffer>
    <experiments>3</experiments>
</comment>
<comment type="subcellular location">
    <subcellularLocation>
        <location>Cell junction</location>
        <location>Adherens junction</location>
    </subcellularLocation>
    <subcellularLocation>
        <location>Cell membrane</location>
    </subcellularLocation>
    <subcellularLocation>
        <location>Cytoplasm</location>
        <location>Cytoskeleton</location>
    </subcellularLocation>
    <subcellularLocation>
        <location>Cell junction</location>
        <location>Focal adhesion</location>
    </subcellularLocation>
    <subcellularLocation>
        <location evidence="1">Nucleus</location>
    </subcellularLocation>
    <subcellularLocation>
        <location evidence="1">Nucleus matrix</location>
    </subcellularLocation>
    <text evidence="1">Colocalizes with the Ten-1 ICD form of TENM1 in the nucleus (By similarity). Colocalizes with actin stress fibers. Also detected at the plasma membrane and in neuronal intranuclear inclusions. Colocalized with PXN at focal adhesions during myogenic differentiation.</text>
</comment>
<comment type="alternative products">
    <event type="alternative splicing"/>
    <isoform>
        <id>Q9BX66-1</id>
        <name evidence="10">1</name>
        <sequence type="displayed"/>
    </isoform>
    <isoform>
        <id>Q9BX66-2</id>
        <name evidence="10">2</name>
        <sequence type="described" ref="VSP_050902 VSP_050910"/>
    </isoform>
    <isoform>
        <id>Q9BX66-3</id>
        <name evidence="10">3</name>
        <sequence type="described" ref="VSP_050898 VSP_050900 VSP_050906 VSP_050912 VSP_050913"/>
    </isoform>
    <isoform>
        <id>Q9BX66-4</id>
        <name evidence="10">4</name>
        <sequence type="described" ref="VSP_050895 VSP_050896 VSP_050899 VSP_050900 VSP_050903 VSP_050907 VSP_050911"/>
    </isoform>
    <isoform>
        <id>Q9BX66-5</id>
        <name evidence="11">5</name>
        <sequence type="described" ref="VSP_050896 VSP_050901 VSP_050911"/>
    </isoform>
    <isoform>
        <id>Q9BX66-6</id>
        <name evidence="12">6</name>
        <sequence type="described" ref="VSP_050896 VSP_050899 VSP_050905 VSP_050911"/>
    </isoform>
    <isoform>
        <id>Q9BX66-7</id>
        <name evidence="24">7</name>
        <sequence type="described" ref="VSP_050895 VSP_050896 VSP_050900 VSP_050903 VSP_050908 VSP_050909"/>
    </isoform>
    <isoform>
        <id>Q9BX66-8</id>
        <name evidence="9">8</name>
        <sequence type="described" ref="VSP_050895 VSP_050899 VSP_050900 VSP_050904 VSP_050911"/>
    </isoform>
    <isoform>
        <id>Q9BX66-9</id>
        <name evidence="24">9</name>
        <sequence type="described" ref="VSP_050899 VSP_050900 VSP_050903 VSP_050911"/>
    </isoform>
    <isoform>
        <id>Q9BX66-10</id>
        <name evidence="24">10</name>
        <sequence type="described" ref="VSP_050895 VSP_050900 VSP_050903 VSP_050907 VSP_050911"/>
    </isoform>
    <isoform>
        <id>Q9BX66-11</id>
        <name>11</name>
        <sequence type="described" ref="VSP_050900 VSP_039210"/>
    </isoform>
    <isoform>
        <id>Q9BX66-12</id>
        <name>12</name>
        <sequence type="described" ref="VSP_050895 VSP_050899 VSP_041193 VSP_050900 VSP_050904 VSP_041194 VSP_050911"/>
    </isoform>
</comment>
<comment type="tissue specificity">
    <text evidence="10 15">Detected in skeletal muscle (at protein level). Widely expressed with highest levels in heart and skeletal muscle.</text>
</comment>
<comment type="PTM">
    <text evidence="1">O-glycosylated.</text>
</comment>
<comment type="miscellaneous">
    <molecule>Isoform 12</molecule>
    <text evidence="24">Derived from mouse ortholog data.</text>
</comment>
<comment type="sequence caution" evidence="24">
    <conflict type="frameshift">
        <sequence resource="EMBL-CDS" id="AAB93496"/>
    </conflict>
</comment>
<comment type="sequence caution" evidence="24">
    <conflict type="erroneous initiation">
        <sequence resource="EMBL-CDS" id="BAA92534"/>
    </conflict>
    <text>Extended N-terminus.</text>
</comment>
<proteinExistence type="evidence at protein level"/>
<sequence length="1292" mass="142513">MSSECDGGSKAVMNGLAPGSNGQDKATADPLRARSISAVKIIPVKTVKNASGLVLPTDMDLTKICTGKGAVTLRASSSYRETPSSSPASPQETRQHESKPGLEPEPSSADEWRLSSSADANGNAQPSSLAAKGYRSVHPNLPSDKSQDATSSSAAQPEVIVVPLYLVNTDRGQEGTARPPTPLGPLGCVPTIPATASAASPLTFPTLDDFIPPHLQRWPHHSQPARASGSFAPISQTPPSFSPPPPLVPPAPEDLRRVSEPDLTGAVSSTDSSPLLNEVSSSLIGTDSQAFPSVSKPSSAYPSTTIVNPTIVLLQHNREQQKRLSSLSDPVSERRVGEQDSAPTQEKPTSPGKAIEKRAKDDSRRVVKSTQDLSDVSMDEVGIPLRNTERSKDWYKTMFKQIHKLNRDTPEENPYFPTYKFPELPEIQQTSEEDNPYTPTYQFPASTPSPKSEDDDSDLYSPRYSFSEDTKSPLSVPRSKSEMSYIDGEKVVKRSATLPLPARSSSLKSSSERNDWEPPDKKVDTRKYRAEPKSIYEYQPGKSSVLTNEKMSRDISPEEIDLKNEPWYKFFSELEFGKPPPKKIWDYTPGDCSILPREDRKTNLDKDLSLCQTELEADLEKMETLNKAPSANVPQSSAISPTPEISSETPGYIYSSNFHAVKRESDGAPGDLTSLENERQIYKSVLEGGDIPLQGLSGLKRPSSSASTKDSESPRHFIPADYLESTEEFIRRRHDDKEKLLADQRRLKREQEEADIAARRHTGVIPTHHQFITNERFGDLLNIDDTAKRKSGSEMRPARAKFDFKAQTLKELPLQKGDIVYIYKQIDQNWYEGEHHGRVGIFPRTYIELLPPAEKAQPKKLTPVQVLEYGEAIAKFNFNGDTQVEMSFRKGERITLLRQVDENWYEGRIPGTSRQGIFPITYVDVIKRPLVKNPVDYMDLPFSSSPSRSATASPQFSSHSKLITPAPSSLPHSRRALSPEMHAVTSEWISLTVGVPGRRSLALTPPLPPLPEASIYNTDHLALSPRASPSLSLSLPHLSWSDRPTPRSVASPLALPSPHKTYSLAPTSQASLHMNGDGGVHTPSSGIHQDSFLQLPLGSSDSVISQLSDAFSSQSKRQPWREESGQYERKAERGAGERGPGGPKISKKSCLKPSDVVRCLSTEQRLSDLNTPEESRPGKPLGSAFPGSEAEQTERHRGGEQAGRKAARRGGSQQPQAQQRRVTPDRSQTSQDLFSYQALYSYIPQNDDELELRDGDIVDVMEKCDDGWFVGTSRRTKQFGTFPGNYVKPLYL</sequence>
<gene>
    <name evidence="33" type="primary">SORBS1</name>
    <name type="synonym">KIAA0894</name>
    <name type="synonym">KIAA1296</name>
    <name type="synonym">SH3D5</name>
</gene>
<evidence type="ECO:0000250" key="1"/>
<evidence type="ECO:0000250" key="2">
    <source>
        <dbReference type="UniProtKB" id="P84109"/>
    </source>
</evidence>
<evidence type="ECO:0000250" key="3">
    <source>
        <dbReference type="UniProtKB" id="Q62417"/>
    </source>
</evidence>
<evidence type="ECO:0000255" key="4">
    <source>
        <dbReference type="PROSITE-ProRule" id="PRU00192"/>
    </source>
</evidence>
<evidence type="ECO:0000255" key="5">
    <source>
        <dbReference type="PROSITE-ProRule" id="PRU00195"/>
    </source>
</evidence>
<evidence type="ECO:0000256" key="6">
    <source>
        <dbReference type="SAM" id="MobiDB-lite"/>
    </source>
</evidence>
<evidence type="ECO:0000269" key="7">
    <source>
    </source>
</evidence>
<evidence type="ECO:0000269" key="8">
    <source>
    </source>
</evidence>
<evidence type="ECO:0000269" key="9">
    <source>
    </source>
</evidence>
<evidence type="ECO:0000269" key="10">
    <source>
    </source>
</evidence>
<evidence type="ECO:0000269" key="11">
    <source>
    </source>
</evidence>
<evidence type="ECO:0000269" key="12">
    <source>
    </source>
</evidence>
<evidence type="ECO:0000269" key="13">
    <source>
    </source>
</evidence>
<evidence type="ECO:0000269" key="14">
    <source>
    </source>
</evidence>
<evidence type="ECO:0000269" key="15">
    <source>
    </source>
</evidence>
<evidence type="ECO:0000303" key="16">
    <source>
    </source>
</evidence>
<evidence type="ECO:0000303" key="17">
    <source>
    </source>
</evidence>
<evidence type="ECO:0000303" key="18">
    <source>
    </source>
</evidence>
<evidence type="ECO:0000303" key="19">
    <source>
    </source>
</evidence>
<evidence type="ECO:0000303" key="20">
    <source>
    </source>
</evidence>
<evidence type="ECO:0000303" key="21">
    <source>
    </source>
</evidence>
<evidence type="ECO:0000303" key="22">
    <source>
    </source>
</evidence>
<evidence type="ECO:0000303" key="23">
    <source>
    </source>
</evidence>
<evidence type="ECO:0000305" key="24"/>
<evidence type="ECO:0000312" key="25">
    <source>
        <dbReference type="EMBL" id="AAD27647.1"/>
    </source>
</evidence>
<evidence type="ECO:0000312" key="26">
    <source>
        <dbReference type="EMBL" id="AAF22175.1"/>
    </source>
</evidence>
<evidence type="ECO:0000312" key="27">
    <source>
        <dbReference type="EMBL" id="AAH42612.1"/>
    </source>
</evidence>
<evidence type="ECO:0000312" key="28">
    <source>
        <dbReference type="EMBL" id="AAK37563.1"/>
    </source>
</evidence>
<evidence type="ECO:0000312" key="29">
    <source>
        <dbReference type="EMBL" id="AAK57480.1"/>
    </source>
</evidence>
<evidence type="ECO:0000312" key="30">
    <source>
        <dbReference type="EMBL" id="BAA92534.1"/>
    </source>
</evidence>
<evidence type="ECO:0000312" key="31">
    <source>
        <dbReference type="EMBL" id="CAB55947.1"/>
    </source>
</evidence>
<evidence type="ECO:0000312" key="32">
    <source>
        <dbReference type="EMBL" id="CAD34588.1"/>
    </source>
</evidence>
<evidence type="ECO:0000312" key="33">
    <source>
        <dbReference type="HGNC" id="HGNC:14565"/>
    </source>
</evidence>
<evidence type="ECO:0007744" key="34">
    <source>
    </source>
</evidence>
<evidence type="ECO:0007744" key="35">
    <source>
    </source>
</evidence>
<evidence type="ECO:0007744" key="36">
    <source>
    </source>
</evidence>
<evidence type="ECO:0007744" key="37">
    <source>
    </source>
</evidence>
<evidence type="ECO:0007829" key="38">
    <source>
        <dbReference type="PDB" id="2ECZ"/>
    </source>
</evidence>
<evidence type="ECO:0007829" key="39">
    <source>
        <dbReference type="PDB" id="2LJ0"/>
    </source>
</evidence>
<evidence type="ECO:0007829" key="40">
    <source>
        <dbReference type="PDB" id="2MOX"/>
    </source>
</evidence>
<evidence type="ECO:0007829" key="41">
    <source>
        <dbReference type="PDB" id="2O9S"/>
    </source>
</evidence>
<evidence type="ECO:0007829" key="42">
    <source>
        <dbReference type="PDB" id="4LNP"/>
    </source>
</evidence>
<reference evidence="24 28" key="1">
    <citation type="journal article" date="2001" name="Genomics">
        <title>Cloning, mapping, and characterization of the human sorbin and SH3 domain containing 1 (SORBS1) gene: a protein associated with c-Abl during insulin signaling in the hepatoma cell line Hep3B.</title>
        <authorList>
            <person name="Lin W.-H."/>
            <person name="Huang C.-J."/>
            <person name="Liu M.-W."/>
            <person name="Chang H.-M."/>
            <person name="Chen Y.-J."/>
            <person name="Tai T.-Y."/>
            <person name="Chuang L.-M."/>
        </authorList>
    </citation>
    <scope>NUCLEOTIDE SEQUENCE [MRNA] (ISOFORMS 1; 2; 3 AND 4)</scope>
    <scope>TISSUE SPECIFICITY</scope>
    <scope>INTERACTION WITH ABL1 AND INSULIN RECEPTOR</scope>
    <scope>VARIANT PRO-61</scope>
    <source>
        <tissue evidence="25">Liver</tissue>
        <tissue evidence="28">Skeletal muscle</tissue>
    </source>
</reference>
<reference evidence="24 29" key="2">
    <citation type="journal article" date="2001" name="Hum. Mol. Genet.">
        <title>Ataxin-7 interacts with a Cbl-associated protein that it recruits into neuronal intranuclear inclusions.</title>
        <authorList>
            <person name="Lebre A.-S."/>
            <person name="Jamot L."/>
            <person name="Takahashi J."/>
            <person name="Spassky N."/>
            <person name="Leprince C."/>
            <person name="Ravise N."/>
            <person name="Zander C."/>
            <person name="Fujigasaki H."/>
            <person name="Kussel-Andermann P."/>
            <person name="Duyckaerts C."/>
            <person name="Camonis J.H."/>
            <person name="Brice A."/>
        </authorList>
    </citation>
    <scope>NUCLEOTIDE SEQUENCE [MRNA] (ISOFORM 8)</scope>
    <scope>SUBCELLULAR LOCATION</scope>
    <scope>INTERACTION WITH SCA7</scope>
    <scope>VARIANT PRO-61</scope>
    <source>
        <tissue evidence="29">Retina</tissue>
    </source>
</reference>
<reference evidence="24 26" key="3">
    <citation type="journal article" date="2001" name="Hum. Mol. Genet.">
        <title>Molecular scanning of the human sorbin and SH3-domain-containing-1 (SORBS1) gene: positive association of the T228A polymorphism with obesity and type 2 diabetes.</title>
        <authorList>
            <person name="Lin W.-H."/>
            <person name="Chiu K.C."/>
            <person name="Chang H.-M."/>
            <person name="Lee K.C."/>
            <person name="Tai T.-Y."/>
            <person name="Chuang L.-M."/>
        </authorList>
    </citation>
    <scope>NUCLEOTIDE SEQUENCE [MRNA] (ISOFORM 5)</scope>
    <scope>VARIANTS PRO-61; TRP-74 AND ALA-237</scope>
    <source>
        <tissue evidence="26">Skeletal muscle</tissue>
    </source>
</reference>
<reference evidence="24 32" key="4">
    <citation type="journal article" date="2003" name="Biochem. Biophys. Res. Commun.">
        <title>The c-Cbl-associated protein and c-Cbl are two new partners of the SH2-containing inositol polyphosphate 5-phosphatase SHIP2.</title>
        <authorList>
            <person name="Vandenbroere I."/>
            <person name="Paternotte N."/>
            <person name="Dumont J.E."/>
            <person name="Erneux C."/>
            <person name="Pirson I."/>
        </authorList>
    </citation>
    <scope>NUCLEOTIDE SEQUENCE [MRNA] (ISOFORM 6)</scope>
    <scope>INTERACTION WITH INPPL1</scope>
    <scope>VARIANT PRO-61</scope>
    <source>
        <tissue evidence="32">Brain</tissue>
    </source>
</reference>
<reference key="5">
    <citation type="journal article" date="2007" name="J. Mol. Biol.">
        <title>Paxillin and ponsin interact in nascent costameres of muscle cells.</title>
        <authorList>
            <person name="Gehmlich K."/>
            <person name="Pinotsis N."/>
            <person name="Hayess K."/>
            <person name="van der Ven P.F."/>
            <person name="Milting H."/>
            <person name="El Banayosy A."/>
            <person name="Korfer R."/>
            <person name="Wilmanns M."/>
            <person name="Ehler E."/>
            <person name="Furst D.O."/>
        </authorList>
    </citation>
    <scope>NUCLEOTIDE SEQUENCE [MRNA] (ISOFORM 11)</scope>
    <scope>INTERACTION WITH PXN</scope>
    <scope>X-RAY CRYSTALLOGRAPHY (0.83 ANGSTROMS) OF 870-930 IN COMPLEX WITH PXN PEPTIDE</scope>
    <scope>SUBCELLULAR LOCATION</scope>
    <scope>TISSUE SPECIFICITY</scope>
    <scope>VARIANT PRO-61</scope>
    <source>
        <tissue>Skeletal muscle</tissue>
    </source>
</reference>
<reference evidence="24 30" key="6">
    <citation type="journal article" date="2000" name="DNA Res.">
        <title>Prediction of the coding sequences of unidentified human genes. XVI. The complete sequences of 150 new cDNA clones from brain which code for large proteins in vitro.</title>
        <authorList>
            <person name="Nagase T."/>
            <person name="Kikuno R."/>
            <person name="Ishikawa K."/>
            <person name="Hirosawa M."/>
            <person name="Ohara O."/>
        </authorList>
    </citation>
    <scope>NUCLEOTIDE SEQUENCE [LARGE SCALE MRNA] (ISOFORM 9)</scope>
    <scope>VARIANT PRO-61</scope>
    <source>
        <tissue evidence="30">Brain</tissue>
    </source>
</reference>
<reference evidence="24 31" key="7">
    <citation type="journal article" date="2001" name="Genome Res.">
        <title>Towards a catalog of human genes and proteins: sequencing and analysis of 500 novel complete protein coding human cDNAs.</title>
        <authorList>
            <person name="Wiemann S."/>
            <person name="Weil B."/>
            <person name="Wellenreuther R."/>
            <person name="Gassenhuber J."/>
            <person name="Glassl S."/>
            <person name="Ansorge W."/>
            <person name="Boecher M."/>
            <person name="Bloecker H."/>
            <person name="Bauersachs S."/>
            <person name="Blum H."/>
            <person name="Lauber J."/>
            <person name="Duesterhoeft A."/>
            <person name="Beyer A."/>
            <person name="Koehrer K."/>
            <person name="Strack N."/>
            <person name="Mewes H.-W."/>
            <person name="Ottenwaelder B."/>
            <person name="Obermaier B."/>
            <person name="Tampe J."/>
            <person name="Heubner D."/>
            <person name="Wambutt R."/>
            <person name="Korn B."/>
            <person name="Klein M."/>
            <person name="Poustka A."/>
        </authorList>
    </citation>
    <scope>NUCLEOTIDE SEQUENCE [LARGE SCALE MRNA] (ISOFORM 10)</scope>
    <scope>VARIANT PRO-61</scope>
    <source>
        <tissue evidence="31">Uterus</tissue>
    </source>
</reference>
<reference key="8">
    <citation type="journal article" date="2004" name="Nature">
        <title>The DNA sequence and comparative analysis of human chromosome 10.</title>
        <authorList>
            <person name="Deloukas P."/>
            <person name="Earthrowl M.E."/>
            <person name="Grafham D.V."/>
            <person name="Rubenfield M."/>
            <person name="French L."/>
            <person name="Steward C.A."/>
            <person name="Sims S.K."/>
            <person name="Jones M.C."/>
            <person name="Searle S."/>
            <person name="Scott C."/>
            <person name="Howe K."/>
            <person name="Hunt S.E."/>
            <person name="Andrews T.D."/>
            <person name="Gilbert J.G.R."/>
            <person name="Swarbreck D."/>
            <person name="Ashurst J.L."/>
            <person name="Taylor A."/>
            <person name="Battles J."/>
            <person name="Bird C.P."/>
            <person name="Ainscough R."/>
            <person name="Almeida J.P."/>
            <person name="Ashwell R.I.S."/>
            <person name="Ambrose K.D."/>
            <person name="Babbage A.K."/>
            <person name="Bagguley C.L."/>
            <person name="Bailey J."/>
            <person name="Banerjee R."/>
            <person name="Bates K."/>
            <person name="Beasley H."/>
            <person name="Bray-Allen S."/>
            <person name="Brown A.J."/>
            <person name="Brown J.Y."/>
            <person name="Burford D.C."/>
            <person name="Burrill W."/>
            <person name="Burton J."/>
            <person name="Cahill P."/>
            <person name="Camire D."/>
            <person name="Carter N.P."/>
            <person name="Chapman J.C."/>
            <person name="Clark S.Y."/>
            <person name="Clarke G."/>
            <person name="Clee C.M."/>
            <person name="Clegg S."/>
            <person name="Corby N."/>
            <person name="Coulson A."/>
            <person name="Dhami P."/>
            <person name="Dutta I."/>
            <person name="Dunn M."/>
            <person name="Faulkner L."/>
            <person name="Frankish A."/>
            <person name="Frankland J.A."/>
            <person name="Garner P."/>
            <person name="Garnett J."/>
            <person name="Gribble S."/>
            <person name="Griffiths C."/>
            <person name="Grocock R."/>
            <person name="Gustafson E."/>
            <person name="Hammond S."/>
            <person name="Harley J.L."/>
            <person name="Hart E."/>
            <person name="Heath P.D."/>
            <person name="Ho T.P."/>
            <person name="Hopkins B."/>
            <person name="Horne J."/>
            <person name="Howden P.J."/>
            <person name="Huckle E."/>
            <person name="Hynds C."/>
            <person name="Johnson C."/>
            <person name="Johnson D."/>
            <person name="Kana A."/>
            <person name="Kay M."/>
            <person name="Kimberley A.M."/>
            <person name="Kershaw J.K."/>
            <person name="Kokkinaki M."/>
            <person name="Laird G.K."/>
            <person name="Lawlor S."/>
            <person name="Lee H.M."/>
            <person name="Leongamornlert D.A."/>
            <person name="Laird G."/>
            <person name="Lloyd C."/>
            <person name="Lloyd D.M."/>
            <person name="Loveland J."/>
            <person name="Lovell J."/>
            <person name="McLaren S."/>
            <person name="McLay K.E."/>
            <person name="McMurray A."/>
            <person name="Mashreghi-Mohammadi M."/>
            <person name="Matthews L."/>
            <person name="Milne S."/>
            <person name="Nickerson T."/>
            <person name="Nguyen M."/>
            <person name="Overton-Larty E."/>
            <person name="Palmer S.A."/>
            <person name="Pearce A.V."/>
            <person name="Peck A.I."/>
            <person name="Pelan S."/>
            <person name="Phillimore B."/>
            <person name="Porter K."/>
            <person name="Rice C.M."/>
            <person name="Rogosin A."/>
            <person name="Ross M.T."/>
            <person name="Sarafidou T."/>
            <person name="Sehra H.K."/>
            <person name="Shownkeen R."/>
            <person name="Skuce C.D."/>
            <person name="Smith M."/>
            <person name="Standring L."/>
            <person name="Sycamore N."/>
            <person name="Tester J."/>
            <person name="Thorpe A."/>
            <person name="Torcasso W."/>
            <person name="Tracey A."/>
            <person name="Tromans A."/>
            <person name="Tsolas J."/>
            <person name="Wall M."/>
            <person name="Walsh J."/>
            <person name="Wang H."/>
            <person name="Weinstock K."/>
            <person name="West A.P."/>
            <person name="Willey D.L."/>
            <person name="Whitehead S.L."/>
            <person name="Wilming L."/>
            <person name="Wray P.W."/>
            <person name="Young L."/>
            <person name="Chen Y."/>
            <person name="Lovering R.C."/>
            <person name="Moschonas N.K."/>
            <person name="Siebert R."/>
            <person name="Fechtel K."/>
            <person name="Bentley D."/>
            <person name="Durbin R.M."/>
            <person name="Hubbard T."/>
            <person name="Doucette-Stamm L."/>
            <person name="Beck S."/>
            <person name="Smith D.R."/>
            <person name="Rogers J."/>
        </authorList>
    </citation>
    <scope>NUCLEOTIDE SEQUENCE [LARGE SCALE GENOMIC DNA]</scope>
</reference>
<reference key="9">
    <citation type="submission" date="2005-09" db="EMBL/GenBank/DDBJ databases">
        <authorList>
            <person name="Mural R.J."/>
            <person name="Istrail S."/>
            <person name="Sutton G.G."/>
            <person name="Florea L."/>
            <person name="Halpern A.L."/>
            <person name="Mobarry C.M."/>
            <person name="Lippert R."/>
            <person name="Walenz B."/>
            <person name="Shatkay H."/>
            <person name="Dew I."/>
            <person name="Miller J.R."/>
            <person name="Flanigan M.J."/>
            <person name="Edwards N.J."/>
            <person name="Bolanos R."/>
            <person name="Fasulo D."/>
            <person name="Halldorsson B.V."/>
            <person name="Hannenhalli S."/>
            <person name="Turner R."/>
            <person name="Yooseph S."/>
            <person name="Lu F."/>
            <person name="Nusskern D.R."/>
            <person name="Shue B.C."/>
            <person name="Zheng X.H."/>
            <person name="Zhong F."/>
            <person name="Delcher A.L."/>
            <person name="Huson D.H."/>
            <person name="Kravitz S.A."/>
            <person name="Mouchard L."/>
            <person name="Reinert K."/>
            <person name="Remington K.A."/>
            <person name="Clark A.G."/>
            <person name="Waterman M.S."/>
            <person name="Eichler E.E."/>
            <person name="Adams M.D."/>
            <person name="Hunkapiller M.W."/>
            <person name="Myers E.W."/>
            <person name="Venter J.C."/>
        </authorList>
    </citation>
    <scope>NUCLEOTIDE SEQUENCE [LARGE SCALE GENOMIC DNA]</scope>
</reference>
<reference evidence="24 27" key="10">
    <citation type="journal article" date="2004" name="Genome Res.">
        <title>The status, quality, and expansion of the NIH full-length cDNA project: the Mammalian Gene Collection (MGC).</title>
        <authorList>
            <consortium name="The MGC Project Team"/>
        </authorList>
    </citation>
    <scope>NUCLEOTIDE SEQUENCE [LARGE SCALE MRNA] (ISOFORMS 7 AND 9)</scope>
    <scope>VARIANT PRO-61</scope>
    <source>
        <tissue evidence="27">Testis</tissue>
    </source>
</reference>
<reference key="11">
    <citation type="submission" date="1996-09" db="EMBL/GenBank/DDBJ databases">
        <title>A Fas-ligand associated factor 2, FLAF2, potentiates Fas-ligand stability.</title>
        <authorList>
            <person name="Hachiya T."/>
            <person name="Kobayasi A."/>
            <person name="Touji S."/>
            <person name="Tamai K."/>
        </authorList>
    </citation>
    <scope>NUCLEOTIDE SEQUENCE [MRNA] OF 752-888</scope>
    <source>
        <tissue>Placenta</tissue>
    </source>
</reference>
<reference key="12">
    <citation type="journal article" date="2008" name="Proc. Natl. Acad. Sci. U.S.A.">
        <title>A quantitative atlas of mitotic phosphorylation.</title>
        <authorList>
            <person name="Dephoure N."/>
            <person name="Zhou C."/>
            <person name="Villen J."/>
            <person name="Beausoleil S.A."/>
            <person name="Bakalarski C.E."/>
            <person name="Elledge S.J."/>
            <person name="Gygi S.P."/>
        </authorList>
    </citation>
    <scope>PHOSPHORYLATION [LARGE SCALE ANALYSIS] AT SER-86; SER-89; SER-472; SER-665; THR-862 AND SER-945</scope>
    <scope>PHOSPHORYLATION [LARGE SCALE ANALYSIS] AT SER-478 AND SER-735 (ISOFORM 10)</scope>
    <scope>PHOSPHORYLATION [LARGE SCALE ANALYSIS] AT SER-1213 (ISOFORM 12)</scope>
    <scope>PHOSPHORYLATION [LARGE SCALE ANALYSIS] AT SER-346 AND SER-603 (ISOFORM 4)</scope>
    <scope>PHOSPHORYLATION [LARGE SCALE ANALYSIS] AT SER-923 (ISOFORM 5)</scope>
    <scope>PHOSPHORYLATION [LARGE SCALE ANALYSIS] AT SER-765 (ISOFORM 6)</scope>
    <scope>PHOSPHORYLATION [LARGE SCALE ANALYSIS] AT SER-469 (ISOFORM 7)</scope>
    <scope>PHOSPHORYLATION [LARGE SCALE ANALYSIS] AT SER-730 (ISOFORM 8)</scope>
    <scope>PHOSPHORYLATION [LARGE SCALE ANALYSIS] AT SER-387 AND SER-700 (ISOFORM 9)</scope>
    <scope>IDENTIFICATION BY MASS SPECTROMETRY [LARGE SCALE ANALYSIS]</scope>
    <source>
        <tissue>Cervix carcinoma</tissue>
    </source>
</reference>
<reference key="13">
    <citation type="journal article" date="2009" name="Anal. Chem.">
        <title>Lys-N and trypsin cover complementary parts of the phosphoproteome in a refined SCX-based approach.</title>
        <authorList>
            <person name="Gauci S."/>
            <person name="Helbig A.O."/>
            <person name="Slijper M."/>
            <person name="Krijgsveld J."/>
            <person name="Heck A.J."/>
            <person name="Mohammed S."/>
        </authorList>
    </citation>
    <scope>IDENTIFICATION BY MASS SPECTROMETRY [LARGE SCALE ANALYSIS]</scope>
</reference>
<reference key="14">
    <citation type="journal article" date="2010" name="Sci. Signal.">
        <title>Quantitative phosphoproteomics reveals widespread full phosphorylation site occupancy during mitosis.</title>
        <authorList>
            <person name="Olsen J.V."/>
            <person name="Vermeulen M."/>
            <person name="Santamaria A."/>
            <person name="Kumar C."/>
            <person name="Miller M.L."/>
            <person name="Jensen L.J."/>
            <person name="Gnad F."/>
            <person name="Cox J."/>
            <person name="Jensen T.S."/>
            <person name="Nigg E.A."/>
            <person name="Brunak S."/>
            <person name="Mann M."/>
        </authorList>
    </citation>
    <scope>IDENTIFICATION BY MASS SPECTROMETRY [LARGE SCALE ANALYSIS]</scope>
    <source>
        <tissue>Cervix carcinoma</tissue>
    </source>
</reference>
<reference key="15">
    <citation type="journal article" date="2011" name="Sci. Signal.">
        <title>System-wide temporal characterization of the proteome and phosphoproteome of human embryonic stem cell differentiation.</title>
        <authorList>
            <person name="Rigbolt K.T."/>
            <person name="Prokhorova T.A."/>
            <person name="Akimov V."/>
            <person name="Henningsen J."/>
            <person name="Johansen P.T."/>
            <person name="Kratchmarova I."/>
            <person name="Kassem M."/>
            <person name="Mann M."/>
            <person name="Olsen J.V."/>
            <person name="Blagoev B."/>
        </authorList>
    </citation>
    <scope>PHOSPHORYLATION [LARGE SCALE ANALYSIS] AT SER-481</scope>
    <scope>IDENTIFICATION BY MASS SPECTROMETRY [LARGE SCALE ANALYSIS]</scope>
</reference>
<reference key="16">
    <citation type="journal article" date="2013" name="J. Proteome Res.">
        <title>Toward a comprehensive characterization of a human cancer cell phosphoproteome.</title>
        <authorList>
            <person name="Zhou H."/>
            <person name="Di Palma S."/>
            <person name="Preisinger C."/>
            <person name="Peng M."/>
            <person name="Polat A.N."/>
            <person name="Heck A.J."/>
            <person name="Mohammed S."/>
        </authorList>
    </citation>
    <scope>PHOSPHORYLATION [LARGE SCALE ANALYSIS] AT SER-89; SER-350 AND SER-665</scope>
    <scope>IDENTIFICATION BY MASS SPECTROMETRY [LARGE SCALE ANALYSIS]</scope>
    <source>
        <tissue>Cervix carcinoma</tissue>
        <tissue>Erythroleukemia</tissue>
    </source>
</reference>
<reference key="17">
    <citation type="journal article" date="2014" name="J. Proteomics">
        <title>An enzyme assisted RP-RPLC approach for in-depth analysis of human liver phosphoproteome.</title>
        <authorList>
            <person name="Bian Y."/>
            <person name="Song C."/>
            <person name="Cheng K."/>
            <person name="Dong M."/>
            <person name="Wang F."/>
            <person name="Huang J."/>
            <person name="Sun D."/>
            <person name="Wang L."/>
            <person name="Ye M."/>
            <person name="Zou H."/>
        </authorList>
    </citation>
    <scope>PHOSPHORYLATION [LARGE SCALE ANALYSIS] AT SER-242; SER-259; SER-341; SER-350; SER-556; SER-665; THR-708; THR-862 AND TYR-937</scope>
    <scope>PHOSPHORYLATION [LARGE SCALE ANALYSIS] AT SER-114 (ISOFORMS 12 AND 8)</scope>
    <scope>PHOSPHORYLATION [LARGE SCALE ANALYSIS] AT SER-105 (ISOFORM 4)</scope>
    <scope>PHOSPHORYLATION [LARGE SCALE ANALYSIS] AT SER-137 AND SER-452 (ISOFORM 6)</scope>
    <scope>PHOSPHORYLATION [LARGE SCALE ANALYSIS] AT SER-146 (ISOFORM 9)</scope>
    <scope>IDENTIFICATION BY MASS SPECTROMETRY [LARGE SCALE ANALYSIS]</scope>
    <source>
        <tissue>Liver</tissue>
    </source>
</reference>
<reference key="18">
    <citation type="journal article" date="2007" name="J. Am. Chem. Soc.">
        <title>Second SH3 domain of ponsin solved from powder diffraction.</title>
        <authorList>
            <person name="Margiolaki I."/>
            <person name="Wright J.P."/>
            <person name="Wilmanns M."/>
            <person name="Fitch A.N."/>
            <person name="Pinotsis N."/>
        </authorList>
    </citation>
    <scope>X-RAY CRYSTALLOGRAPHY (1.5 ANGSTROMS) OF 870-930</scope>
</reference>
<reference key="19">
    <citation type="submission" date="2009-02" db="PDB data bank">
        <title>Solution structure of SH3 domains of human Sorbin and SH3 domain-containing protein 1.</title>
        <authorList>
            <consortium name="RIKEN structural genomics initiative (RSGI)"/>
        </authorList>
    </citation>
    <scope>STRUCTURE BY NMR OF 796-926</scope>
</reference>
<reference key="20">
    <citation type="journal article" date="2006" name="Science">
        <title>The consensus coding sequences of human breast and colorectal cancers.</title>
        <authorList>
            <person name="Sjoeblom T."/>
            <person name="Jones S."/>
            <person name="Wood L.D."/>
            <person name="Parsons D.W."/>
            <person name="Lin J."/>
            <person name="Barber T.D."/>
            <person name="Mandelker D."/>
            <person name="Leary R.J."/>
            <person name="Ptak J."/>
            <person name="Silliman N."/>
            <person name="Szabo S."/>
            <person name="Buckhaults P."/>
            <person name="Farrell C."/>
            <person name="Meeh P."/>
            <person name="Markowitz S.D."/>
            <person name="Willis J."/>
            <person name="Dawson D."/>
            <person name="Willson J.K.V."/>
            <person name="Gazdar A.F."/>
            <person name="Hartigan J."/>
            <person name="Wu L."/>
            <person name="Liu C."/>
            <person name="Parmigiani G."/>
            <person name="Park B.H."/>
            <person name="Bachman K.E."/>
            <person name="Papadopoulos N."/>
            <person name="Vogelstein B."/>
            <person name="Kinzler K.W."/>
            <person name="Velculescu V.E."/>
        </authorList>
    </citation>
    <scope>VARIANT [LARGE SCALE ANALYSIS] ALA-195</scope>
</reference>
<name>SRBS1_HUMAN</name>